<gene>
    <name type="primary">xyl1</name>
    <name type="synonym">xyrA</name>
</gene>
<dbReference type="EC" id="1.1.1.307"/>
<dbReference type="EMBL" id="AF219625">
    <property type="protein sequence ID" value="AAF61912.1"/>
    <property type="molecule type" value="Genomic_DNA"/>
</dbReference>
<dbReference type="SMR" id="Q9P8R5"/>
<dbReference type="PaxDb" id="5061-CADANGAP00000355"/>
<dbReference type="EnsemblFungi" id="CAK36912">
    <property type="protein sequence ID" value="CAK36912"/>
    <property type="gene ID" value="An01g03740"/>
</dbReference>
<dbReference type="KEGG" id="ang:An01g03740"/>
<dbReference type="VEuPathDB" id="FungiDB:An01g03740"/>
<dbReference type="VEuPathDB" id="FungiDB:ASPNIDRAFT2_1156486"/>
<dbReference type="VEuPathDB" id="FungiDB:ATCC64974_20080"/>
<dbReference type="VEuPathDB" id="FungiDB:M747DRAFT_265636"/>
<dbReference type="eggNOG" id="KOG1577">
    <property type="taxonomic scope" value="Eukaryota"/>
</dbReference>
<dbReference type="OrthoDB" id="416253at2759"/>
<dbReference type="BRENDA" id="1.1.1.307">
    <property type="organism ID" value="518"/>
</dbReference>
<dbReference type="UniPathway" id="UPA00810"/>
<dbReference type="GO" id="GO:0032866">
    <property type="term" value="F:D-xylose reductase (NADPH) activity"/>
    <property type="evidence" value="ECO:0007669"/>
    <property type="project" value="InterPro"/>
</dbReference>
<dbReference type="GO" id="GO:0042843">
    <property type="term" value="P:D-xylose catabolic process"/>
    <property type="evidence" value="ECO:0007669"/>
    <property type="project" value="UniProtKB-UniPathway"/>
</dbReference>
<dbReference type="CDD" id="cd19115">
    <property type="entry name" value="AKR_AKR2D1"/>
    <property type="match status" value="1"/>
</dbReference>
<dbReference type="FunFam" id="3.20.20.100:FF:000007">
    <property type="entry name" value="NAD(P)H-dependent D-xylose reductase xyl1"/>
    <property type="match status" value="1"/>
</dbReference>
<dbReference type="Gene3D" id="3.20.20.100">
    <property type="entry name" value="NADP-dependent oxidoreductase domain"/>
    <property type="match status" value="1"/>
</dbReference>
<dbReference type="InterPro" id="IPR020471">
    <property type="entry name" value="AKR"/>
</dbReference>
<dbReference type="InterPro" id="IPR044487">
    <property type="entry name" value="AKR2D"/>
</dbReference>
<dbReference type="InterPro" id="IPR018170">
    <property type="entry name" value="Aldo/ket_reductase_CS"/>
</dbReference>
<dbReference type="InterPro" id="IPR023210">
    <property type="entry name" value="NADP_OxRdtase_dom"/>
</dbReference>
<dbReference type="InterPro" id="IPR036812">
    <property type="entry name" value="NADP_OxRdtase_dom_sf"/>
</dbReference>
<dbReference type="PANTHER" id="PTHR11732">
    <property type="entry name" value="ALDO/KETO REDUCTASE"/>
    <property type="match status" value="1"/>
</dbReference>
<dbReference type="Pfam" id="PF00248">
    <property type="entry name" value="Aldo_ket_red"/>
    <property type="match status" value="1"/>
</dbReference>
<dbReference type="PIRSF" id="PIRSF000097">
    <property type="entry name" value="AKR"/>
    <property type="match status" value="1"/>
</dbReference>
<dbReference type="PRINTS" id="PR00069">
    <property type="entry name" value="ALDKETRDTASE"/>
</dbReference>
<dbReference type="SUPFAM" id="SSF51430">
    <property type="entry name" value="NAD(P)-linked oxidoreductase"/>
    <property type="match status" value="1"/>
</dbReference>
<dbReference type="PROSITE" id="PS00798">
    <property type="entry name" value="ALDOKETO_REDUCTASE_1"/>
    <property type="match status" value="1"/>
</dbReference>
<dbReference type="PROSITE" id="PS00062">
    <property type="entry name" value="ALDOKETO_REDUCTASE_2"/>
    <property type="match status" value="1"/>
</dbReference>
<dbReference type="PROSITE" id="PS00063">
    <property type="entry name" value="ALDOKETO_REDUCTASE_3"/>
    <property type="match status" value="1"/>
</dbReference>
<proteinExistence type="evidence at transcript level"/>
<comment type="function">
    <text evidence="1 2">Catalyzes the initial reaction in the xylose utilization pathway by reducing D-xylose into xylitol. Xylose is a major component of hemicelluloses such as xylan. Most fungi utilize D-xylose via three enzymatic reactions, xylose reductase (XR), xylitol dehydrogenase (XDH), and xylulokinase, to form xylulose 5-phosphate, which enters pentose phosphate pathway (By similarity).</text>
</comment>
<comment type="catalytic activity">
    <reaction>
        <text>xylitol + NAD(+) = D-xylose + NADH + H(+)</text>
        <dbReference type="Rhea" id="RHEA:27441"/>
        <dbReference type="ChEBI" id="CHEBI:15378"/>
        <dbReference type="ChEBI" id="CHEBI:17151"/>
        <dbReference type="ChEBI" id="CHEBI:53455"/>
        <dbReference type="ChEBI" id="CHEBI:57540"/>
        <dbReference type="ChEBI" id="CHEBI:57945"/>
        <dbReference type="EC" id="1.1.1.307"/>
    </reaction>
</comment>
<comment type="catalytic activity">
    <reaction>
        <text>xylitol + NADP(+) = D-xylose + NADPH + H(+)</text>
        <dbReference type="Rhea" id="RHEA:27445"/>
        <dbReference type="ChEBI" id="CHEBI:15378"/>
        <dbReference type="ChEBI" id="CHEBI:17151"/>
        <dbReference type="ChEBI" id="CHEBI:53455"/>
        <dbReference type="ChEBI" id="CHEBI:57783"/>
        <dbReference type="ChEBI" id="CHEBI:58349"/>
        <dbReference type="EC" id="1.1.1.307"/>
    </reaction>
</comment>
<comment type="pathway">
    <text>Carbohydrate metabolism; D-xylose degradation.</text>
</comment>
<comment type="induction">
    <text evidence="2">Expression controlled by the xylanolytic transcriptional activator xlnR.</text>
</comment>
<comment type="similarity">
    <text evidence="3">Belongs to the aldo/keto reductase family.</text>
</comment>
<sequence>MASPTVKLNSGYDMPLVGFGLWKVNNDTCADQIYHAIKEGYRLFDGACDYGNEVEAGQGIARAIKDGLVKREELFIVSKLWNSFHDGDRVEPICRKQLADWGIDYFDLYIVHFPISLKYVDPAVRYPPGWKSEKDELEFGNATIQETWTAMESLVDKKLARSIGISNFSAQLVMDLLRYARIRPATLQIEHHPYLTQTRLVEYAQKEGLTVTAYSSFGPLSFLELSVQNAVDSPPLFEHQLVKSIAEKHGRTPAQVLLRWATQRGIAVIPKSNNPQRLKQNLDVTGWNLEEEEIKAISGLDRGLRFNDPLGYGLYAPIF</sequence>
<accession>Q9P8R5</accession>
<keyword id="KW-0119">Carbohydrate metabolism</keyword>
<keyword id="KW-0520">NAD</keyword>
<keyword id="KW-0560">Oxidoreductase</keyword>
<keyword id="KW-0859">Xylose metabolism</keyword>
<name>XYL1_ASPNG</name>
<feature type="chain" id="PRO_0000124658" description="NAD(P)H-dependent D-xylose reductase xyl1">
    <location>
        <begin position="1"/>
        <end position="319"/>
    </location>
</feature>
<feature type="active site" description="Proton donor" evidence="1">
    <location>
        <position position="50"/>
    </location>
</feature>
<feature type="binding site" evidence="1">
    <location>
        <position position="112"/>
    </location>
    <ligand>
        <name>substrate</name>
    </ligand>
</feature>
<feature type="binding site" evidence="1">
    <location>
        <begin position="166"/>
        <end position="167"/>
    </location>
    <ligand>
        <name>NAD(+)</name>
        <dbReference type="ChEBI" id="CHEBI:57540"/>
    </ligand>
</feature>
<feature type="binding site" evidence="1">
    <location>
        <begin position="215"/>
        <end position="224"/>
    </location>
    <ligand>
        <name>NAD(+)</name>
        <dbReference type="ChEBI" id="CHEBI:57540"/>
    </ligand>
</feature>
<feature type="binding site" evidence="1">
    <location>
        <begin position="271"/>
        <end position="281"/>
    </location>
    <ligand>
        <name>NAD(+)</name>
        <dbReference type="ChEBI" id="CHEBI:57540"/>
    </ligand>
</feature>
<feature type="site" description="Lowers pKa of active site Tyr" evidence="1">
    <location>
        <position position="79"/>
    </location>
</feature>
<protein>
    <recommendedName>
        <fullName>NAD(P)H-dependent D-xylose reductase xyl1</fullName>
        <shortName>XR</shortName>
        <ecNumber>1.1.1.307</ecNumber>
    </recommendedName>
</protein>
<reference key="1">
    <citation type="journal article" date="2000" name="Mol. Microbiol.">
        <title>The Aspergillus niger transcriptional activator XlnR, which is involved in the degradation of the polysaccharides xylan and cellulose, also regulates D-xylose reductase gene expression.</title>
        <authorList>
            <person name="Hasper A.A."/>
            <person name="Visser J."/>
            <person name="de Graaff L.H."/>
        </authorList>
    </citation>
    <scope>NUCLEOTIDE SEQUENCE [GENOMIC DNA]</scope>
    <scope>FUNCTION</scope>
    <scope>INDUCTION</scope>
</reference>
<organism>
    <name type="scientific">Aspergillus niger</name>
    <dbReference type="NCBI Taxonomy" id="5061"/>
    <lineage>
        <taxon>Eukaryota</taxon>
        <taxon>Fungi</taxon>
        <taxon>Dikarya</taxon>
        <taxon>Ascomycota</taxon>
        <taxon>Pezizomycotina</taxon>
        <taxon>Eurotiomycetes</taxon>
        <taxon>Eurotiomycetidae</taxon>
        <taxon>Eurotiales</taxon>
        <taxon>Aspergillaceae</taxon>
        <taxon>Aspergillus</taxon>
        <taxon>Aspergillus subgen. Circumdati</taxon>
    </lineage>
</organism>
<evidence type="ECO:0000250" key="1"/>
<evidence type="ECO:0000269" key="2">
    <source>
    </source>
</evidence>
<evidence type="ECO:0000305" key="3"/>